<proteinExistence type="inferred from homology"/>
<organism>
    <name type="scientific">Leptospira borgpetersenii serovar Hardjo-bovis (strain L550)</name>
    <dbReference type="NCBI Taxonomy" id="355276"/>
    <lineage>
        <taxon>Bacteria</taxon>
        <taxon>Pseudomonadati</taxon>
        <taxon>Spirochaetota</taxon>
        <taxon>Spirochaetia</taxon>
        <taxon>Leptospirales</taxon>
        <taxon>Leptospiraceae</taxon>
        <taxon>Leptospira</taxon>
    </lineage>
</organism>
<feature type="chain" id="PRO_0000296491" description="Large ribosomal subunit protein bL32">
    <location>
        <begin position="1"/>
        <end position="66"/>
    </location>
</feature>
<feature type="region of interest" description="Disordered" evidence="2">
    <location>
        <begin position="1"/>
        <end position="20"/>
    </location>
</feature>
<name>RL32_LEPBL</name>
<evidence type="ECO:0000255" key="1">
    <source>
        <dbReference type="HAMAP-Rule" id="MF_00340"/>
    </source>
</evidence>
<evidence type="ECO:0000256" key="2">
    <source>
        <dbReference type="SAM" id="MobiDB-lite"/>
    </source>
</evidence>
<evidence type="ECO:0000305" key="3"/>
<protein>
    <recommendedName>
        <fullName evidence="1">Large ribosomal subunit protein bL32</fullName>
    </recommendedName>
    <alternativeName>
        <fullName evidence="3">50S ribosomal protein L32</fullName>
    </alternativeName>
</protein>
<keyword id="KW-0687">Ribonucleoprotein</keyword>
<keyword id="KW-0689">Ribosomal protein</keyword>
<dbReference type="EMBL" id="CP000348">
    <property type="protein sequence ID" value="ABJ79507.1"/>
    <property type="molecule type" value="Genomic_DNA"/>
</dbReference>
<dbReference type="RefSeq" id="WP_004281555.1">
    <property type="nucleotide sequence ID" value="NC_008508.1"/>
</dbReference>
<dbReference type="SMR" id="Q04ZI8"/>
<dbReference type="KEGG" id="lbl:LBL_2094"/>
<dbReference type="HOGENOM" id="CLU_129084_1_3_12"/>
<dbReference type="GO" id="GO:0015934">
    <property type="term" value="C:large ribosomal subunit"/>
    <property type="evidence" value="ECO:0007669"/>
    <property type="project" value="InterPro"/>
</dbReference>
<dbReference type="GO" id="GO:0003735">
    <property type="term" value="F:structural constituent of ribosome"/>
    <property type="evidence" value="ECO:0007669"/>
    <property type="project" value="InterPro"/>
</dbReference>
<dbReference type="GO" id="GO:0006412">
    <property type="term" value="P:translation"/>
    <property type="evidence" value="ECO:0007669"/>
    <property type="project" value="UniProtKB-UniRule"/>
</dbReference>
<dbReference type="HAMAP" id="MF_00340">
    <property type="entry name" value="Ribosomal_bL32"/>
    <property type="match status" value="1"/>
</dbReference>
<dbReference type="InterPro" id="IPR002677">
    <property type="entry name" value="Ribosomal_bL32"/>
</dbReference>
<dbReference type="InterPro" id="IPR044957">
    <property type="entry name" value="Ribosomal_bL32_bact"/>
</dbReference>
<dbReference type="InterPro" id="IPR011332">
    <property type="entry name" value="Ribosomal_zn-bd"/>
</dbReference>
<dbReference type="NCBIfam" id="TIGR01031">
    <property type="entry name" value="rpmF_bact"/>
    <property type="match status" value="1"/>
</dbReference>
<dbReference type="PANTHER" id="PTHR35534">
    <property type="entry name" value="50S RIBOSOMAL PROTEIN L32"/>
    <property type="match status" value="1"/>
</dbReference>
<dbReference type="PANTHER" id="PTHR35534:SF1">
    <property type="entry name" value="LARGE RIBOSOMAL SUBUNIT PROTEIN BL32"/>
    <property type="match status" value="1"/>
</dbReference>
<dbReference type="Pfam" id="PF01783">
    <property type="entry name" value="Ribosomal_L32p"/>
    <property type="match status" value="1"/>
</dbReference>
<dbReference type="SUPFAM" id="SSF57829">
    <property type="entry name" value="Zn-binding ribosomal proteins"/>
    <property type="match status" value="1"/>
</dbReference>
<accession>Q04ZI8</accession>
<gene>
    <name evidence="1" type="primary">rpmF</name>
    <name type="ordered locus">LBL_2094</name>
</gene>
<sequence length="66" mass="7550">MAVPKRRKSKSKVRTKRAHHAIGKPNLVPCPNCNVYRLPHRICPTCGFYKTGIVLEPKVKKPKEEN</sequence>
<reference key="1">
    <citation type="journal article" date="2006" name="Proc. Natl. Acad. Sci. U.S.A.">
        <title>Genome reduction in Leptospira borgpetersenii reflects limited transmission potential.</title>
        <authorList>
            <person name="Bulach D.M."/>
            <person name="Zuerner R.L."/>
            <person name="Wilson P."/>
            <person name="Seemann T."/>
            <person name="McGrath A."/>
            <person name="Cullen P.A."/>
            <person name="Davis J."/>
            <person name="Johnson M."/>
            <person name="Kuczek E."/>
            <person name="Alt D.P."/>
            <person name="Peterson-Burch B."/>
            <person name="Coppel R.L."/>
            <person name="Rood J.I."/>
            <person name="Davies J.K."/>
            <person name="Adler B."/>
        </authorList>
    </citation>
    <scope>NUCLEOTIDE SEQUENCE [LARGE SCALE GENOMIC DNA]</scope>
    <source>
        <strain>L550</strain>
    </source>
</reference>
<comment type="similarity">
    <text evidence="1">Belongs to the bacterial ribosomal protein bL32 family.</text>
</comment>